<sequence length="379" mass="42717">MTNIRKTHPLLKIVNNAFIDLPAPSNISSWWNFGSLLGICLVLQILTGLFLAMHYTADTTTAFSSVTHICRDVNYGWIIRYMHANGASMFFICLFMHVGRGLYYGSYTYMETWNIGVILLFATMATAFMGYVLPWGQMSFWGATVITNLLSAIPYIGTNLVEWIWGGFSVDKATLTRFFAFHFIFPFIIAALAMVHLLFLHETGSNNPTGISSDADKIPFHPYYTIKDILGALLLILVLMTLVLFSPDLLGDPDNYTPANPLNTPPHIKPEWYFLFAYAILRSIPNKLGGVLALVLSILVLVLMPLLHTSKQRSMMFRPISQCLFWILVADLLTLTWIGGQPVEHPYIIIGQLASIMYFLLILVLMPMASTIENNLLKW</sequence>
<name>CYB_CEPRU</name>
<evidence type="ECO:0000250" key="1"/>
<evidence type="ECO:0000250" key="2">
    <source>
        <dbReference type="UniProtKB" id="P00157"/>
    </source>
</evidence>
<evidence type="ECO:0000255" key="3">
    <source>
        <dbReference type="PROSITE-ProRule" id="PRU00967"/>
    </source>
</evidence>
<evidence type="ECO:0000255" key="4">
    <source>
        <dbReference type="PROSITE-ProRule" id="PRU00968"/>
    </source>
</evidence>
<keyword id="KW-0249">Electron transport</keyword>
<keyword id="KW-0349">Heme</keyword>
<keyword id="KW-0408">Iron</keyword>
<keyword id="KW-0472">Membrane</keyword>
<keyword id="KW-0479">Metal-binding</keyword>
<keyword id="KW-0496">Mitochondrion</keyword>
<keyword id="KW-0999">Mitochondrion inner membrane</keyword>
<keyword id="KW-0679">Respiratory chain</keyword>
<keyword id="KW-0812">Transmembrane</keyword>
<keyword id="KW-1133">Transmembrane helix</keyword>
<keyword id="KW-0813">Transport</keyword>
<keyword id="KW-0830">Ubiquinone</keyword>
<gene>
    <name type="primary">MT-CYB</name>
    <name type="synonym">COB</name>
    <name type="synonym">CYTB</name>
    <name type="synonym">MTCYB</name>
</gene>
<proteinExistence type="inferred from homology"/>
<protein>
    <recommendedName>
        <fullName>Cytochrome b</fullName>
    </recommendedName>
    <alternativeName>
        <fullName>Complex III subunit 3</fullName>
    </alternativeName>
    <alternativeName>
        <fullName>Complex III subunit III</fullName>
    </alternativeName>
    <alternativeName>
        <fullName>Cytochrome b-c1 complex subunit 3</fullName>
    </alternativeName>
    <alternativeName>
        <fullName>Ubiquinol-cytochrome-c reductase complex cytochrome b subunit</fullName>
    </alternativeName>
</protein>
<feature type="chain" id="PRO_0000060756" description="Cytochrome b">
    <location>
        <begin position="1"/>
        <end position="379"/>
    </location>
</feature>
<feature type="transmembrane region" description="Helical" evidence="2">
    <location>
        <begin position="33"/>
        <end position="53"/>
    </location>
</feature>
<feature type="transmembrane region" description="Helical" evidence="2">
    <location>
        <begin position="77"/>
        <end position="98"/>
    </location>
</feature>
<feature type="transmembrane region" description="Helical" evidence="2">
    <location>
        <begin position="113"/>
        <end position="133"/>
    </location>
</feature>
<feature type="transmembrane region" description="Helical" evidence="2">
    <location>
        <begin position="178"/>
        <end position="198"/>
    </location>
</feature>
<feature type="transmembrane region" description="Helical" evidence="2">
    <location>
        <begin position="226"/>
        <end position="246"/>
    </location>
</feature>
<feature type="transmembrane region" description="Helical" evidence="2">
    <location>
        <begin position="288"/>
        <end position="308"/>
    </location>
</feature>
<feature type="transmembrane region" description="Helical" evidence="2">
    <location>
        <begin position="320"/>
        <end position="340"/>
    </location>
</feature>
<feature type="transmembrane region" description="Helical" evidence="2">
    <location>
        <begin position="347"/>
        <end position="367"/>
    </location>
</feature>
<feature type="binding site" description="axial binding residue" evidence="2">
    <location>
        <position position="83"/>
    </location>
    <ligand>
        <name>heme b</name>
        <dbReference type="ChEBI" id="CHEBI:60344"/>
        <label>b562</label>
    </ligand>
    <ligandPart>
        <name>Fe</name>
        <dbReference type="ChEBI" id="CHEBI:18248"/>
    </ligandPart>
</feature>
<feature type="binding site" description="axial binding residue" evidence="2">
    <location>
        <position position="97"/>
    </location>
    <ligand>
        <name>heme b</name>
        <dbReference type="ChEBI" id="CHEBI:60344"/>
        <label>b566</label>
    </ligand>
    <ligandPart>
        <name>Fe</name>
        <dbReference type="ChEBI" id="CHEBI:18248"/>
    </ligandPart>
</feature>
<feature type="binding site" description="axial binding residue" evidence="2">
    <location>
        <position position="182"/>
    </location>
    <ligand>
        <name>heme b</name>
        <dbReference type="ChEBI" id="CHEBI:60344"/>
        <label>b562</label>
    </ligand>
    <ligandPart>
        <name>Fe</name>
        <dbReference type="ChEBI" id="CHEBI:18248"/>
    </ligandPart>
</feature>
<feature type="binding site" description="axial binding residue" evidence="2">
    <location>
        <position position="196"/>
    </location>
    <ligand>
        <name>heme b</name>
        <dbReference type="ChEBI" id="CHEBI:60344"/>
        <label>b566</label>
    </ligand>
    <ligandPart>
        <name>Fe</name>
        <dbReference type="ChEBI" id="CHEBI:18248"/>
    </ligandPart>
</feature>
<feature type="binding site" evidence="2">
    <location>
        <position position="201"/>
    </location>
    <ligand>
        <name>a ubiquinone</name>
        <dbReference type="ChEBI" id="CHEBI:16389"/>
    </ligand>
</feature>
<dbReference type="EMBL" id="AF153900">
    <property type="protein sequence ID" value="AAK26688.1"/>
    <property type="molecule type" value="Genomic_DNA"/>
</dbReference>
<dbReference type="SMR" id="Q9B5Q6"/>
<dbReference type="GO" id="GO:0005743">
    <property type="term" value="C:mitochondrial inner membrane"/>
    <property type="evidence" value="ECO:0007669"/>
    <property type="project" value="UniProtKB-SubCell"/>
</dbReference>
<dbReference type="GO" id="GO:0045275">
    <property type="term" value="C:respiratory chain complex III"/>
    <property type="evidence" value="ECO:0007669"/>
    <property type="project" value="InterPro"/>
</dbReference>
<dbReference type="GO" id="GO:0046872">
    <property type="term" value="F:metal ion binding"/>
    <property type="evidence" value="ECO:0007669"/>
    <property type="project" value="UniProtKB-KW"/>
</dbReference>
<dbReference type="GO" id="GO:0008121">
    <property type="term" value="F:ubiquinol-cytochrome-c reductase activity"/>
    <property type="evidence" value="ECO:0007669"/>
    <property type="project" value="InterPro"/>
</dbReference>
<dbReference type="GO" id="GO:0006122">
    <property type="term" value="P:mitochondrial electron transport, ubiquinol to cytochrome c"/>
    <property type="evidence" value="ECO:0007669"/>
    <property type="project" value="TreeGrafter"/>
</dbReference>
<dbReference type="CDD" id="cd00290">
    <property type="entry name" value="cytochrome_b_C"/>
    <property type="match status" value="1"/>
</dbReference>
<dbReference type="CDD" id="cd00284">
    <property type="entry name" value="Cytochrome_b_N"/>
    <property type="match status" value="1"/>
</dbReference>
<dbReference type="FunFam" id="1.20.810.10:FF:000002">
    <property type="entry name" value="Cytochrome b"/>
    <property type="match status" value="1"/>
</dbReference>
<dbReference type="Gene3D" id="1.20.810.10">
    <property type="entry name" value="Cytochrome Bc1 Complex, Chain C"/>
    <property type="match status" value="1"/>
</dbReference>
<dbReference type="InterPro" id="IPR005798">
    <property type="entry name" value="Cyt_b/b6_C"/>
</dbReference>
<dbReference type="InterPro" id="IPR036150">
    <property type="entry name" value="Cyt_b/b6_C_sf"/>
</dbReference>
<dbReference type="InterPro" id="IPR005797">
    <property type="entry name" value="Cyt_b/b6_N"/>
</dbReference>
<dbReference type="InterPro" id="IPR027387">
    <property type="entry name" value="Cytb/b6-like_sf"/>
</dbReference>
<dbReference type="InterPro" id="IPR030689">
    <property type="entry name" value="Cytochrome_b"/>
</dbReference>
<dbReference type="InterPro" id="IPR048260">
    <property type="entry name" value="Cytochrome_b_C_euk/bac"/>
</dbReference>
<dbReference type="InterPro" id="IPR048259">
    <property type="entry name" value="Cytochrome_b_N_euk/bac"/>
</dbReference>
<dbReference type="InterPro" id="IPR016174">
    <property type="entry name" value="Di-haem_cyt_TM"/>
</dbReference>
<dbReference type="PANTHER" id="PTHR19271">
    <property type="entry name" value="CYTOCHROME B"/>
    <property type="match status" value="1"/>
</dbReference>
<dbReference type="PANTHER" id="PTHR19271:SF16">
    <property type="entry name" value="CYTOCHROME B"/>
    <property type="match status" value="1"/>
</dbReference>
<dbReference type="Pfam" id="PF00032">
    <property type="entry name" value="Cytochrom_B_C"/>
    <property type="match status" value="1"/>
</dbReference>
<dbReference type="Pfam" id="PF00033">
    <property type="entry name" value="Cytochrome_B"/>
    <property type="match status" value="1"/>
</dbReference>
<dbReference type="PIRSF" id="PIRSF038885">
    <property type="entry name" value="COB"/>
    <property type="match status" value="1"/>
</dbReference>
<dbReference type="SUPFAM" id="SSF81648">
    <property type="entry name" value="a domain/subunit of cytochrome bc1 complex (Ubiquinol-cytochrome c reductase)"/>
    <property type="match status" value="1"/>
</dbReference>
<dbReference type="SUPFAM" id="SSF81342">
    <property type="entry name" value="Transmembrane di-heme cytochromes"/>
    <property type="match status" value="1"/>
</dbReference>
<dbReference type="PROSITE" id="PS51003">
    <property type="entry name" value="CYTB_CTER"/>
    <property type="match status" value="1"/>
</dbReference>
<dbReference type="PROSITE" id="PS51002">
    <property type="entry name" value="CYTB_NTER"/>
    <property type="match status" value="1"/>
</dbReference>
<reference key="1">
    <citation type="journal article" date="2001" name="Mol. Phylogenet. Evol.">
        <title>Retrieval of four adaptive lineages in duiker antelope: evidence from mitochondrial DNA sequences and fluorescence in situ hybridization.</title>
        <authorList>
            <person name="van Vuuren B.J."/>
            <person name="Robinson T.J."/>
        </authorList>
    </citation>
    <scope>NUCLEOTIDE SEQUENCE [GENOMIC DNA]</scope>
</reference>
<comment type="function">
    <text evidence="2">Component of the ubiquinol-cytochrome c reductase complex (complex III or cytochrome b-c1 complex) that is part of the mitochondrial respiratory chain. The b-c1 complex mediates electron transfer from ubiquinol to cytochrome c. Contributes to the generation of a proton gradient across the mitochondrial membrane that is then used for ATP synthesis.</text>
</comment>
<comment type="cofactor">
    <cofactor evidence="2">
        <name>heme b</name>
        <dbReference type="ChEBI" id="CHEBI:60344"/>
    </cofactor>
    <text evidence="2">Binds 2 heme b groups non-covalently.</text>
</comment>
<comment type="subunit">
    <text evidence="2">The cytochrome bc1 complex contains 11 subunits: 3 respiratory subunits (MT-CYB, CYC1 and UQCRFS1), 2 core proteins (UQCRC1 and UQCRC2) and 6 low-molecular weight proteins (UQCRH/QCR6, UQCRB/QCR7, UQCRQ/QCR8, UQCR10/QCR9, UQCR11/QCR10 and a cleavage product of UQCRFS1). This cytochrome bc1 complex then forms a dimer.</text>
</comment>
<comment type="subcellular location">
    <subcellularLocation>
        <location evidence="2">Mitochondrion inner membrane</location>
        <topology evidence="2">Multi-pass membrane protein</topology>
    </subcellularLocation>
</comment>
<comment type="miscellaneous">
    <text evidence="1">Heme 1 (or BL or b562) is low-potential and absorbs at about 562 nm, and heme 2 (or BH or b566) is high-potential and absorbs at about 566 nm.</text>
</comment>
<comment type="similarity">
    <text evidence="3 4">Belongs to the cytochrome b family.</text>
</comment>
<comment type="caution">
    <text evidence="2">The full-length protein contains only eight transmembrane helices, not nine as predicted by bioinformatics tools.</text>
</comment>
<organism>
    <name type="scientific">Cephalophorus rubidus</name>
    <name type="common">Ruwenzori duiker</name>
    <name type="synonym">Cephalophus nigrifrons rubidus</name>
    <dbReference type="NCBI Taxonomy" id="129229"/>
    <lineage>
        <taxon>Eukaryota</taxon>
        <taxon>Metazoa</taxon>
        <taxon>Chordata</taxon>
        <taxon>Craniata</taxon>
        <taxon>Vertebrata</taxon>
        <taxon>Euteleostomi</taxon>
        <taxon>Mammalia</taxon>
        <taxon>Eutheria</taxon>
        <taxon>Laurasiatheria</taxon>
        <taxon>Artiodactyla</taxon>
        <taxon>Ruminantia</taxon>
        <taxon>Pecora</taxon>
        <taxon>Bovidae</taxon>
        <taxon>Cephalophinae</taxon>
        <taxon>Cephalophorus</taxon>
    </lineage>
</organism>
<geneLocation type="mitochondrion"/>
<accession>Q9B5Q6</accession>